<name>HIS1_ECOHS</name>
<gene>
    <name evidence="1" type="primary">hisG</name>
    <name type="ordered locus">EcHS_A2158</name>
</gene>
<dbReference type="EC" id="2.4.2.17" evidence="1"/>
<dbReference type="EMBL" id="CP000802">
    <property type="protein sequence ID" value="ABV06447.1"/>
    <property type="molecule type" value="Genomic_DNA"/>
</dbReference>
<dbReference type="RefSeq" id="WP_000131782.1">
    <property type="nucleotide sequence ID" value="NC_009800.1"/>
</dbReference>
<dbReference type="SMR" id="A8A1P3"/>
<dbReference type="GeneID" id="93775154"/>
<dbReference type="KEGG" id="ecx:EcHS_A2158"/>
<dbReference type="HOGENOM" id="CLU_038115_1_0_6"/>
<dbReference type="UniPathway" id="UPA00031">
    <property type="reaction ID" value="UER00006"/>
</dbReference>
<dbReference type="GO" id="GO:0005737">
    <property type="term" value="C:cytoplasm"/>
    <property type="evidence" value="ECO:0007669"/>
    <property type="project" value="UniProtKB-SubCell"/>
</dbReference>
<dbReference type="GO" id="GO:0005524">
    <property type="term" value="F:ATP binding"/>
    <property type="evidence" value="ECO:0007669"/>
    <property type="project" value="UniProtKB-KW"/>
</dbReference>
<dbReference type="GO" id="GO:0003879">
    <property type="term" value="F:ATP phosphoribosyltransferase activity"/>
    <property type="evidence" value="ECO:0007669"/>
    <property type="project" value="UniProtKB-UniRule"/>
</dbReference>
<dbReference type="GO" id="GO:0000287">
    <property type="term" value="F:magnesium ion binding"/>
    <property type="evidence" value="ECO:0007669"/>
    <property type="project" value="UniProtKB-UniRule"/>
</dbReference>
<dbReference type="GO" id="GO:0000105">
    <property type="term" value="P:L-histidine biosynthetic process"/>
    <property type="evidence" value="ECO:0007669"/>
    <property type="project" value="UniProtKB-UniRule"/>
</dbReference>
<dbReference type="CDD" id="cd13592">
    <property type="entry name" value="PBP2_HisGL2"/>
    <property type="match status" value="1"/>
</dbReference>
<dbReference type="FunFam" id="3.30.70.120:FF:000002">
    <property type="entry name" value="ATP phosphoribosyltransferase"/>
    <property type="match status" value="1"/>
</dbReference>
<dbReference type="FunFam" id="3.40.190.10:FF:000008">
    <property type="entry name" value="ATP phosphoribosyltransferase"/>
    <property type="match status" value="1"/>
</dbReference>
<dbReference type="Gene3D" id="3.30.70.120">
    <property type="match status" value="1"/>
</dbReference>
<dbReference type="Gene3D" id="3.40.190.10">
    <property type="entry name" value="Periplasmic binding protein-like II"/>
    <property type="match status" value="2"/>
</dbReference>
<dbReference type="HAMAP" id="MF_00079">
    <property type="entry name" value="HisG_Long"/>
    <property type="match status" value="1"/>
</dbReference>
<dbReference type="InterPro" id="IPR020621">
    <property type="entry name" value="ATP-PRT_HisG_long"/>
</dbReference>
<dbReference type="InterPro" id="IPR013820">
    <property type="entry name" value="ATP_PRibTrfase_cat"/>
</dbReference>
<dbReference type="InterPro" id="IPR018198">
    <property type="entry name" value="ATP_PRibTrfase_CS"/>
</dbReference>
<dbReference type="InterPro" id="IPR001348">
    <property type="entry name" value="ATP_PRibTrfase_HisG"/>
</dbReference>
<dbReference type="InterPro" id="IPR013115">
    <property type="entry name" value="HisG_C"/>
</dbReference>
<dbReference type="InterPro" id="IPR011322">
    <property type="entry name" value="N-reg_PII-like_a/b"/>
</dbReference>
<dbReference type="InterPro" id="IPR015867">
    <property type="entry name" value="N-reg_PII/ATP_PRibTrfase_C"/>
</dbReference>
<dbReference type="NCBIfam" id="TIGR00070">
    <property type="entry name" value="hisG"/>
    <property type="match status" value="1"/>
</dbReference>
<dbReference type="NCBIfam" id="TIGR03455">
    <property type="entry name" value="HisG_C-term"/>
    <property type="match status" value="1"/>
</dbReference>
<dbReference type="PANTHER" id="PTHR21403:SF8">
    <property type="entry name" value="ATP PHOSPHORIBOSYLTRANSFERASE"/>
    <property type="match status" value="1"/>
</dbReference>
<dbReference type="PANTHER" id="PTHR21403">
    <property type="entry name" value="ATP PHOSPHORIBOSYLTRANSFERASE ATP-PRTASE"/>
    <property type="match status" value="1"/>
</dbReference>
<dbReference type="Pfam" id="PF01634">
    <property type="entry name" value="HisG"/>
    <property type="match status" value="1"/>
</dbReference>
<dbReference type="Pfam" id="PF08029">
    <property type="entry name" value="HisG_C"/>
    <property type="match status" value="1"/>
</dbReference>
<dbReference type="SUPFAM" id="SSF54913">
    <property type="entry name" value="GlnB-like"/>
    <property type="match status" value="1"/>
</dbReference>
<dbReference type="SUPFAM" id="SSF53850">
    <property type="entry name" value="Periplasmic binding protein-like II"/>
    <property type="match status" value="1"/>
</dbReference>
<dbReference type="PROSITE" id="PS01316">
    <property type="entry name" value="ATP_P_PHORIBOSYLTR"/>
    <property type="match status" value="1"/>
</dbReference>
<proteinExistence type="inferred from homology"/>
<accession>A8A1P3</accession>
<feature type="chain" id="PRO_1000057524" description="ATP phosphoribosyltransferase">
    <location>
        <begin position="1"/>
        <end position="299"/>
    </location>
</feature>
<reference key="1">
    <citation type="journal article" date="2008" name="J. Bacteriol.">
        <title>The pangenome structure of Escherichia coli: comparative genomic analysis of E. coli commensal and pathogenic isolates.</title>
        <authorList>
            <person name="Rasko D.A."/>
            <person name="Rosovitz M.J."/>
            <person name="Myers G.S.A."/>
            <person name="Mongodin E.F."/>
            <person name="Fricke W.F."/>
            <person name="Gajer P."/>
            <person name="Crabtree J."/>
            <person name="Sebaihia M."/>
            <person name="Thomson N.R."/>
            <person name="Chaudhuri R."/>
            <person name="Henderson I.R."/>
            <person name="Sperandio V."/>
            <person name="Ravel J."/>
        </authorList>
    </citation>
    <scope>NUCLEOTIDE SEQUENCE [LARGE SCALE GENOMIC DNA]</scope>
    <source>
        <strain>HS</strain>
    </source>
</reference>
<sequence>MTDNTRLRIAMQKSGRLSDDSRELLARCGIKINLHTQRLIAMAENMPIDILRVRDDDIPGLVMDGVVDLGIIGENVLEEELLNRRAQGEDPRYFTLRRLDFGGCRLSLATPVDEAWDGPLSLNGKRIATSYPHLLKRYLDQKGISFKSCLLNGSVEVAPRAGLADAICDLVSTGATLEANGLREVEVIYRSKACLIQRDGEMEESKQQLIDKLLTRIQGVIQARESKYIMMHAPTERLDEVIALLPGAERPTILPLAGDQQRVAMHMVSSETLFWETMEKLKALGASSILVLPIEKMME</sequence>
<evidence type="ECO:0000255" key="1">
    <source>
        <dbReference type="HAMAP-Rule" id="MF_00079"/>
    </source>
</evidence>
<comment type="function">
    <text evidence="1">Catalyzes the condensation of ATP and 5-phosphoribose 1-diphosphate to form N'-(5'-phosphoribosyl)-ATP (PR-ATP). Has a crucial role in the pathway because the rate of histidine biosynthesis seems to be controlled primarily by regulation of HisG enzymatic activity.</text>
</comment>
<comment type="catalytic activity">
    <reaction evidence="1">
        <text>1-(5-phospho-beta-D-ribosyl)-ATP + diphosphate = 5-phospho-alpha-D-ribose 1-diphosphate + ATP</text>
        <dbReference type="Rhea" id="RHEA:18473"/>
        <dbReference type="ChEBI" id="CHEBI:30616"/>
        <dbReference type="ChEBI" id="CHEBI:33019"/>
        <dbReference type="ChEBI" id="CHEBI:58017"/>
        <dbReference type="ChEBI" id="CHEBI:73183"/>
        <dbReference type="EC" id="2.4.2.17"/>
    </reaction>
</comment>
<comment type="cofactor">
    <cofactor evidence="1">
        <name>Mg(2+)</name>
        <dbReference type="ChEBI" id="CHEBI:18420"/>
    </cofactor>
</comment>
<comment type="activity regulation">
    <text evidence="1">Feedback inhibited by histidine.</text>
</comment>
<comment type="pathway">
    <text evidence="1">Amino-acid biosynthesis; L-histidine biosynthesis; L-histidine from 5-phospho-alpha-D-ribose 1-diphosphate: step 1/9.</text>
</comment>
<comment type="subunit">
    <text evidence="1">Equilibrium between an active dimeric form, an inactive hexameric form and higher aggregates. Interconversion between the various forms is largely reversible and is influenced by the natural substrates and inhibitors of the enzyme.</text>
</comment>
<comment type="subcellular location">
    <subcellularLocation>
        <location evidence="1">Cytoplasm</location>
    </subcellularLocation>
</comment>
<comment type="similarity">
    <text evidence="1">Belongs to the ATP phosphoribosyltransferase family. Long subfamily.</text>
</comment>
<keyword id="KW-0028">Amino-acid biosynthesis</keyword>
<keyword id="KW-0067">ATP-binding</keyword>
<keyword id="KW-0963">Cytoplasm</keyword>
<keyword id="KW-0328">Glycosyltransferase</keyword>
<keyword id="KW-0368">Histidine biosynthesis</keyword>
<keyword id="KW-0460">Magnesium</keyword>
<keyword id="KW-0479">Metal-binding</keyword>
<keyword id="KW-0547">Nucleotide-binding</keyword>
<keyword id="KW-0808">Transferase</keyword>
<organism>
    <name type="scientific">Escherichia coli O9:H4 (strain HS)</name>
    <dbReference type="NCBI Taxonomy" id="331112"/>
    <lineage>
        <taxon>Bacteria</taxon>
        <taxon>Pseudomonadati</taxon>
        <taxon>Pseudomonadota</taxon>
        <taxon>Gammaproteobacteria</taxon>
        <taxon>Enterobacterales</taxon>
        <taxon>Enterobacteriaceae</taxon>
        <taxon>Escherichia</taxon>
    </lineage>
</organism>
<protein>
    <recommendedName>
        <fullName evidence="1">ATP phosphoribosyltransferase</fullName>
        <shortName evidence="1">ATP-PRT</shortName>
        <shortName evidence="1">ATP-PRTase</shortName>
        <ecNumber evidence="1">2.4.2.17</ecNumber>
    </recommendedName>
</protein>